<reference key="1">
    <citation type="submission" date="2007-11" db="EMBL/GenBank/DDBJ databases">
        <authorList>
            <consortium name="The Salmonella enterica serovar Arizonae Genome Sequencing Project"/>
            <person name="McClelland M."/>
            <person name="Sanderson E.K."/>
            <person name="Porwollik S."/>
            <person name="Spieth J."/>
            <person name="Clifton W.S."/>
            <person name="Fulton R."/>
            <person name="Chunyan W."/>
            <person name="Wollam A."/>
            <person name="Shah N."/>
            <person name="Pepin K."/>
            <person name="Bhonagiri V."/>
            <person name="Nash W."/>
            <person name="Johnson M."/>
            <person name="Thiruvilangam P."/>
            <person name="Wilson R."/>
        </authorList>
    </citation>
    <scope>NUCLEOTIDE SEQUENCE [LARGE SCALE GENOMIC DNA]</scope>
    <source>
        <strain>ATCC BAA-731 / CDC346-86 / RSK2980</strain>
    </source>
</reference>
<evidence type="ECO:0000255" key="1">
    <source>
        <dbReference type="HAMAP-Rule" id="MF_00706"/>
    </source>
</evidence>
<name>ECOT_SALAR</name>
<protein>
    <recommendedName>
        <fullName evidence="1">Ecotin</fullName>
    </recommendedName>
</protein>
<sequence>MKMFVPAVVFAASASAWAVNGDNAQPLEKIAPYPQAEKGMKRQVITLTPQQDESTLKVELLIGQTLNVDCNQHRLGGKLKTKTLEGWGYDYYVFDNVTSQVSTMMACPEGKKEPKFVTAWLGQDGMLRYNSKLPIVVYTPANVDVKYRIWKADANVQNAVAR</sequence>
<proteinExistence type="inferred from homology"/>
<gene>
    <name evidence="1" type="primary">eco</name>
    <name type="ordered locus">SARI_00628</name>
</gene>
<accession>A9MJZ3</accession>
<keyword id="KW-1015">Disulfide bond</keyword>
<keyword id="KW-0574">Periplasm</keyword>
<keyword id="KW-0646">Protease inhibitor</keyword>
<keyword id="KW-1185">Reference proteome</keyword>
<keyword id="KW-0722">Serine protease inhibitor</keyword>
<keyword id="KW-0732">Signal</keyword>
<comment type="function">
    <text evidence="1">General inhibitor of pancreatic serine proteases: inhibits chymotrypsin, trypsin, elastases, factor X, kallikrein as well as a variety of other proteases.</text>
</comment>
<comment type="subunit">
    <text evidence="1">Homodimer.</text>
</comment>
<comment type="subcellular location">
    <subcellularLocation>
        <location evidence="1">Periplasm</location>
    </subcellularLocation>
</comment>
<comment type="similarity">
    <text evidence="1">Belongs to the protease inhibitor I11 (ecotin) family.</text>
</comment>
<feature type="signal peptide" evidence="1">
    <location>
        <begin position="1"/>
        <end position="18"/>
    </location>
</feature>
<feature type="chain" id="PRO_1000083194" description="Ecotin">
    <location>
        <begin position="19"/>
        <end position="162"/>
    </location>
</feature>
<feature type="site" description="Reactive bond" evidence="1">
    <location>
        <begin position="104"/>
        <end position="105"/>
    </location>
</feature>
<feature type="disulfide bond" evidence="1">
    <location>
        <begin position="70"/>
        <end position="107"/>
    </location>
</feature>
<dbReference type="EMBL" id="CP000880">
    <property type="protein sequence ID" value="ABX20552.1"/>
    <property type="molecule type" value="Genomic_DNA"/>
</dbReference>
<dbReference type="SMR" id="A9MJZ3"/>
<dbReference type="STRING" id="41514.SARI_00628"/>
<dbReference type="MEROPS" id="I11.001"/>
<dbReference type="KEGG" id="ses:SARI_00628"/>
<dbReference type="HOGENOM" id="CLU_111565_0_0_6"/>
<dbReference type="Proteomes" id="UP000002084">
    <property type="component" value="Chromosome"/>
</dbReference>
<dbReference type="GO" id="GO:0042597">
    <property type="term" value="C:periplasmic space"/>
    <property type="evidence" value="ECO:0007669"/>
    <property type="project" value="UniProtKB-SubCell"/>
</dbReference>
<dbReference type="GO" id="GO:0004867">
    <property type="term" value="F:serine-type endopeptidase inhibitor activity"/>
    <property type="evidence" value="ECO:0007669"/>
    <property type="project" value="UniProtKB-UniRule"/>
</dbReference>
<dbReference type="CDD" id="cd00242">
    <property type="entry name" value="Ecotin"/>
    <property type="match status" value="1"/>
</dbReference>
<dbReference type="FunFam" id="2.60.40.550:FF:000001">
    <property type="entry name" value="Ecotin"/>
    <property type="match status" value="1"/>
</dbReference>
<dbReference type="FunFam" id="4.10.1230.10:FF:000001">
    <property type="entry name" value="Ecotin"/>
    <property type="match status" value="1"/>
</dbReference>
<dbReference type="Gene3D" id="2.60.40.550">
    <property type="entry name" value="Ecotin"/>
    <property type="match status" value="1"/>
</dbReference>
<dbReference type="Gene3D" id="4.10.1230.10">
    <property type="entry name" value="Ecotin, trypsin inhibitor"/>
    <property type="match status" value="1"/>
</dbReference>
<dbReference type="HAMAP" id="MF_00706">
    <property type="entry name" value="Ecotin"/>
    <property type="match status" value="1"/>
</dbReference>
<dbReference type="InterPro" id="IPR027438">
    <property type="entry name" value="Ecotin_C"/>
</dbReference>
<dbReference type="InterPro" id="IPR036198">
    <property type="entry name" value="Ecotin_sf"/>
</dbReference>
<dbReference type="InterPro" id="IPR005658">
    <property type="entry name" value="Prot_inh_ecotin"/>
</dbReference>
<dbReference type="InterPro" id="IPR023084">
    <property type="entry name" value="Prot_inh_ecotin_gammaproteobac"/>
</dbReference>
<dbReference type="NCBIfam" id="NF002987">
    <property type="entry name" value="PRK03719.1"/>
    <property type="match status" value="1"/>
</dbReference>
<dbReference type="PANTHER" id="PTHR35890">
    <property type="match status" value="1"/>
</dbReference>
<dbReference type="PANTHER" id="PTHR35890:SF3">
    <property type="entry name" value="ECOTIN"/>
    <property type="match status" value="1"/>
</dbReference>
<dbReference type="Pfam" id="PF03974">
    <property type="entry name" value="Ecotin"/>
    <property type="match status" value="1"/>
</dbReference>
<dbReference type="PIRSF" id="PIRSF006865">
    <property type="entry name" value="Prot_inh_ecotin"/>
    <property type="match status" value="1"/>
</dbReference>
<dbReference type="SUPFAM" id="SSF49772">
    <property type="entry name" value="Ecotin, trypsin inhibitor"/>
    <property type="match status" value="1"/>
</dbReference>
<organism>
    <name type="scientific">Salmonella arizonae (strain ATCC BAA-731 / CDC346-86 / RSK2980)</name>
    <dbReference type="NCBI Taxonomy" id="41514"/>
    <lineage>
        <taxon>Bacteria</taxon>
        <taxon>Pseudomonadati</taxon>
        <taxon>Pseudomonadota</taxon>
        <taxon>Gammaproteobacteria</taxon>
        <taxon>Enterobacterales</taxon>
        <taxon>Enterobacteriaceae</taxon>
        <taxon>Salmonella</taxon>
    </lineage>
</organism>